<evidence type="ECO:0000255" key="1"/>
<feature type="signal peptide" evidence="1">
    <location>
        <begin position="1"/>
        <end position="22"/>
    </location>
</feature>
<feature type="chain" id="PRO_0000014016" description="Uncharacterized protein MJ1472">
    <location>
        <begin position="23"/>
        <end position="544"/>
    </location>
</feature>
<sequence length="544" mass="63400">MYFSQNAIILVMLMFVISAVFYATIDYKTKEVEDEIKIKEVSLYEKNLINTIDRNIDKIVEDAFVNASYKIMKERKFFTASSEAVAYITSYIKNETKESLNNVNYGYSNISYNISSVKISPTYDPLVVHLYCEIDIKYSKKLNNGELIALKPIVINRDIKLSRIPDPYVYLNKFYYTWGYEKKINIYNFPNDNYNRTFCIILNSSNFNYSEMHNPQSPTELRVIGWDSVSNKIILLPYWVQTWREGNNDVSVIWVRANKNEIYNYNNGQGYIYILYNSTTPVDRQDPEHTFIFFDDFNYFNPDKWDSVGYFIINNSKITVIAGAGSSVYTKQTYGTRYELIFRANFTPSHAQTIGFFTQLSDNDGVGWDMYDWTGNNPELYMRVGYSGSDIGDYVPNSNKYLNKFYIYDLKRISTTDLNFTIFNDTLDIEYSNSFTNGNKGNNYPISITALINLNTNVTVDWIFLKDINDITTTVPPIGVDEYPNLDYKEEKPKTFTGTIYYGEPGKYILVYNSTYSIIGLYTNKTDYWLYPNMPGYKPLIEEN</sequence>
<keyword id="KW-1185">Reference proteome</keyword>
<keyword id="KW-0732">Signal</keyword>
<name>Y1472_METJA</name>
<gene>
    <name type="ordered locus">MJ1472</name>
</gene>
<dbReference type="EMBL" id="L77117">
    <property type="protein sequence ID" value="AAB99487.1"/>
    <property type="molecule type" value="Genomic_DNA"/>
</dbReference>
<dbReference type="PIR" id="G64483">
    <property type="entry name" value="G64483"/>
</dbReference>
<dbReference type="RefSeq" id="WP_010870993.1">
    <property type="nucleotide sequence ID" value="NC_000909.1"/>
</dbReference>
<dbReference type="STRING" id="243232.MJ_1472"/>
<dbReference type="PaxDb" id="243232-MJ_1472"/>
<dbReference type="EnsemblBacteria" id="AAB99487">
    <property type="protein sequence ID" value="AAB99487"/>
    <property type="gene ID" value="MJ_1472"/>
</dbReference>
<dbReference type="GeneID" id="1452377"/>
<dbReference type="KEGG" id="mja:MJ_1472"/>
<dbReference type="eggNOG" id="arCOG03508">
    <property type="taxonomic scope" value="Archaea"/>
</dbReference>
<dbReference type="HOGENOM" id="CLU_041883_0_0_2"/>
<dbReference type="InParanoid" id="Q58867"/>
<dbReference type="OrthoDB" id="66028at2157"/>
<dbReference type="Proteomes" id="UP000000805">
    <property type="component" value="Chromosome"/>
</dbReference>
<dbReference type="InterPro" id="IPR018765">
    <property type="entry name" value="DUF2341"/>
</dbReference>
<dbReference type="Pfam" id="PF10102">
    <property type="entry name" value="DUF2341"/>
    <property type="match status" value="1"/>
</dbReference>
<protein>
    <recommendedName>
        <fullName>Uncharacterized protein MJ1472</fullName>
    </recommendedName>
</protein>
<accession>Q58867</accession>
<reference key="1">
    <citation type="journal article" date="1996" name="Science">
        <title>Complete genome sequence of the methanogenic archaeon, Methanococcus jannaschii.</title>
        <authorList>
            <person name="Bult C.J."/>
            <person name="White O."/>
            <person name="Olsen G.J."/>
            <person name="Zhou L."/>
            <person name="Fleischmann R.D."/>
            <person name="Sutton G.G."/>
            <person name="Blake J.A."/>
            <person name="FitzGerald L.M."/>
            <person name="Clayton R.A."/>
            <person name="Gocayne J.D."/>
            <person name="Kerlavage A.R."/>
            <person name="Dougherty B.A."/>
            <person name="Tomb J.-F."/>
            <person name="Adams M.D."/>
            <person name="Reich C.I."/>
            <person name="Overbeek R."/>
            <person name="Kirkness E.F."/>
            <person name="Weinstock K.G."/>
            <person name="Merrick J.M."/>
            <person name="Glodek A."/>
            <person name="Scott J.L."/>
            <person name="Geoghagen N.S.M."/>
            <person name="Weidman J.F."/>
            <person name="Fuhrmann J.L."/>
            <person name="Nguyen D."/>
            <person name="Utterback T.R."/>
            <person name="Kelley J.M."/>
            <person name="Peterson J.D."/>
            <person name="Sadow P.W."/>
            <person name="Hanna M.C."/>
            <person name="Cotton M.D."/>
            <person name="Roberts K.M."/>
            <person name="Hurst M.A."/>
            <person name="Kaine B.P."/>
            <person name="Borodovsky M."/>
            <person name="Klenk H.-P."/>
            <person name="Fraser C.M."/>
            <person name="Smith H.O."/>
            <person name="Woese C.R."/>
            <person name="Venter J.C."/>
        </authorList>
    </citation>
    <scope>NUCLEOTIDE SEQUENCE [LARGE SCALE GENOMIC DNA]</scope>
    <source>
        <strain>ATCC 43067 / DSM 2661 / JAL-1 / JCM 10045 / NBRC 100440</strain>
    </source>
</reference>
<proteinExistence type="inferred from homology"/>
<organism>
    <name type="scientific">Methanocaldococcus jannaschii (strain ATCC 43067 / DSM 2661 / JAL-1 / JCM 10045 / NBRC 100440)</name>
    <name type="common">Methanococcus jannaschii</name>
    <dbReference type="NCBI Taxonomy" id="243232"/>
    <lineage>
        <taxon>Archaea</taxon>
        <taxon>Methanobacteriati</taxon>
        <taxon>Methanobacteriota</taxon>
        <taxon>Methanomada group</taxon>
        <taxon>Methanococci</taxon>
        <taxon>Methanococcales</taxon>
        <taxon>Methanocaldococcaceae</taxon>
        <taxon>Methanocaldococcus</taxon>
    </lineage>
</organism>